<reference key="1">
    <citation type="journal article" date="1999" name="Nature">
        <title>Sequence and analysis of chromosome 4 of the plant Arabidopsis thaliana.</title>
        <authorList>
            <person name="Mayer K.F.X."/>
            <person name="Schueller C."/>
            <person name="Wambutt R."/>
            <person name="Murphy G."/>
            <person name="Volckaert G."/>
            <person name="Pohl T."/>
            <person name="Duesterhoeft A."/>
            <person name="Stiekema W."/>
            <person name="Entian K.-D."/>
            <person name="Terryn N."/>
            <person name="Harris B."/>
            <person name="Ansorge W."/>
            <person name="Brandt P."/>
            <person name="Grivell L.A."/>
            <person name="Rieger M."/>
            <person name="Weichselgartner M."/>
            <person name="de Simone V."/>
            <person name="Obermaier B."/>
            <person name="Mache R."/>
            <person name="Mueller M."/>
            <person name="Kreis M."/>
            <person name="Delseny M."/>
            <person name="Puigdomenech P."/>
            <person name="Watson M."/>
            <person name="Schmidtheini T."/>
            <person name="Reichert B."/>
            <person name="Portetelle D."/>
            <person name="Perez-Alonso M."/>
            <person name="Boutry M."/>
            <person name="Bancroft I."/>
            <person name="Vos P."/>
            <person name="Hoheisel J."/>
            <person name="Zimmermann W."/>
            <person name="Wedler H."/>
            <person name="Ridley P."/>
            <person name="Langham S.-A."/>
            <person name="McCullagh B."/>
            <person name="Bilham L."/>
            <person name="Robben J."/>
            <person name="van der Schueren J."/>
            <person name="Grymonprez B."/>
            <person name="Chuang Y.-J."/>
            <person name="Vandenbussche F."/>
            <person name="Braeken M."/>
            <person name="Weltjens I."/>
            <person name="Voet M."/>
            <person name="Bastiaens I."/>
            <person name="Aert R."/>
            <person name="Defoor E."/>
            <person name="Weitzenegger T."/>
            <person name="Bothe G."/>
            <person name="Ramsperger U."/>
            <person name="Hilbert H."/>
            <person name="Braun M."/>
            <person name="Holzer E."/>
            <person name="Brandt A."/>
            <person name="Peters S."/>
            <person name="van Staveren M."/>
            <person name="Dirkse W."/>
            <person name="Mooijman P."/>
            <person name="Klein Lankhorst R."/>
            <person name="Rose M."/>
            <person name="Hauf J."/>
            <person name="Koetter P."/>
            <person name="Berneiser S."/>
            <person name="Hempel S."/>
            <person name="Feldpausch M."/>
            <person name="Lamberth S."/>
            <person name="Van den Daele H."/>
            <person name="De Keyser A."/>
            <person name="Buysshaert C."/>
            <person name="Gielen J."/>
            <person name="Villarroel R."/>
            <person name="De Clercq R."/>
            <person name="van Montagu M."/>
            <person name="Rogers J."/>
            <person name="Cronin A."/>
            <person name="Quail M.A."/>
            <person name="Bray-Allen S."/>
            <person name="Clark L."/>
            <person name="Doggett J."/>
            <person name="Hall S."/>
            <person name="Kay M."/>
            <person name="Lennard N."/>
            <person name="McLay K."/>
            <person name="Mayes R."/>
            <person name="Pettett A."/>
            <person name="Rajandream M.A."/>
            <person name="Lyne M."/>
            <person name="Benes V."/>
            <person name="Rechmann S."/>
            <person name="Borkova D."/>
            <person name="Bloecker H."/>
            <person name="Scharfe M."/>
            <person name="Grimm M."/>
            <person name="Loehnert T.-H."/>
            <person name="Dose S."/>
            <person name="de Haan M."/>
            <person name="Maarse A.C."/>
            <person name="Schaefer M."/>
            <person name="Mueller-Auer S."/>
            <person name="Gabel C."/>
            <person name="Fuchs M."/>
            <person name="Fartmann B."/>
            <person name="Granderath K."/>
            <person name="Dauner D."/>
            <person name="Herzl A."/>
            <person name="Neumann S."/>
            <person name="Argiriou A."/>
            <person name="Vitale D."/>
            <person name="Liguori R."/>
            <person name="Piravandi E."/>
            <person name="Massenet O."/>
            <person name="Quigley F."/>
            <person name="Clabauld G."/>
            <person name="Muendlein A."/>
            <person name="Felber R."/>
            <person name="Schnabl S."/>
            <person name="Hiller R."/>
            <person name="Schmidt W."/>
            <person name="Lecharny A."/>
            <person name="Aubourg S."/>
            <person name="Chefdor F."/>
            <person name="Cooke R."/>
            <person name="Berger C."/>
            <person name="Monfort A."/>
            <person name="Casacuberta E."/>
            <person name="Gibbons T."/>
            <person name="Weber N."/>
            <person name="Vandenbol M."/>
            <person name="Bargues M."/>
            <person name="Terol J."/>
            <person name="Torres A."/>
            <person name="Perez-Perez A."/>
            <person name="Purnelle B."/>
            <person name="Bent E."/>
            <person name="Johnson S."/>
            <person name="Tacon D."/>
            <person name="Jesse T."/>
            <person name="Heijnen L."/>
            <person name="Schwarz S."/>
            <person name="Scholler P."/>
            <person name="Heber S."/>
            <person name="Francs P."/>
            <person name="Bielke C."/>
            <person name="Frishman D."/>
            <person name="Haase D."/>
            <person name="Lemcke K."/>
            <person name="Mewes H.-W."/>
            <person name="Stocker S."/>
            <person name="Zaccaria P."/>
            <person name="Bevan M."/>
            <person name="Wilson R.K."/>
            <person name="de la Bastide M."/>
            <person name="Habermann K."/>
            <person name="Parnell L."/>
            <person name="Dedhia N."/>
            <person name="Gnoj L."/>
            <person name="Schutz K."/>
            <person name="Huang E."/>
            <person name="Spiegel L."/>
            <person name="Sekhon M."/>
            <person name="Murray J."/>
            <person name="Sheet P."/>
            <person name="Cordes M."/>
            <person name="Abu-Threideh J."/>
            <person name="Stoneking T."/>
            <person name="Kalicki J."/>
            <person name="Graves T."/>
            <person name="Harmon G."/>
            <person name="Edwards J."/>
            <person name="Latreille P."/>
            <person name="Courtney L."/>
            <person name="Cloud J."/>
            <person name="Abbott A."/>
            <person name="Scott K."/>
            <person name="Johnson D."/>
            <person name="Minx P."/>
            <person name="Bentley D."/>
            <person name="Fulton B."/>
            <person name="Miller N."/>
            <person name="Greco T."/>
            <person name="Kemp K."/>
            <person name="Kramer J."/>
            <person name="Fulton L."/>
            <person name="Mardis E."/>
            <person name="Dante M."/>
            <person name="Pepin K."/>
            <person name="Hillier L.W."/>
            <person name="Nelson J."/>
            <person name="Spieth J."/>
            <person name="Ryan E."/>
            <person name="Andrews S."/>
            <person name="Geisel C."/>
            <person name="Layman D."/>
            <person name="Du H."/>
            <person name="Ali J."/>
            <person name="Berghoff A."/>
            <person name="Jones K."/>
            <person name="Drone K."/>
            <person name="Cotton M."/>
            <person name="Joshu C."/>
            <person name="Antonoiu B."/>
            <person name="Zidanic M."/>
            <person name="Strong C."/>
            <person name="Sun H."/>
            <person name="Lamar B."/>
            <person name="Yordan C."/>
            <person name="Ma P."/>
            <person name="Zhong J."/>
            <person name="Preston R."/>
            <person name="Vil D."/>
            <person name="Shekher M."/>
            <person name="Matero A."/>
            <person name="Shah R."/>
            <person name="Swaby I.K."/>
            <person name="O'Shaughnessy A."/>
            <person name="Rodriguez M."/>
            <person name="Hoffman J."/>
            <person name="Till S."/>
            <person name="Granat S."/>
            <person name="Shohdy N."/>
            <person name="Hasegawa A."/>
            <person name="Hameed A."/>
            <person name="Lodhi M."/>
            <person name="Johnson A."/>
            <person name="Chen E."/>
            <person name="Marra M.A."/>
            <person name="Martienssen R."/>
            <person name="McCombie W.R."/>
        </authorList>
    </citation>
    <scope>NUCLEOTIDE SEQUENCE [LARGE SCALE GENOMIC DNA]</scope>
    <source>
        <strain>cv. Columbia</strain>
    </source>
</reference>
<reference key="2">
    <citation type="journal article" date="2017" name="Plant J.">
        <title>Araport11: a complete reannotation of the Arabidopsis thaliana reference genome.</title>
        <authorList>
            <person name="Cheng C.Y."/>
            <person name="Krishnakumar V."/>
            <person name="Chan A.P."/>
            <person name="Thibaud-Nissen F."/>
            <person name="Schobel S."/>
            <person name="Town C.D."/>
        </authorList>
    </citation>
    <scope>GENOME REANNOTATION</scope>
    <source>
        <strain>cv. Columbia</strain>
    </source>
</reference>
<reference key="3">
    <citation type="journal article" date="2008" name="Trends Plant Sci.">
        <title>The plant B3 superfamily.</title>
        <authorList>
            <person name="Swaminathan K."/>
            <person name="Peterson K."/>
            <person name="Jack T."/>
        </authorList>
    </citation>
    <scope>GENE FAMILY</scope>
</reference>
<evidence type="ECO:0000255" key="1">
    <source>
        <dbReference type="PROSITE-ProRule" id="PRU00326"/>
    </source>
</evidence>
<evidence type="ECO:0000256" key="2">
    <source>
        <dbReference type="SAM" id="MobiDB-lite"/>
    </source>
</evidence>
<accession>Q9SB79</accession>
<organism>
    <name type="scientific">Arabidopsis thaliana</name>
    <name type="common">Mouse-ear cress</name>
    <dbReference type="NCBI Taxonomy" id="3702"/>
    <lineage>
        <taxon>Eukaryota</taxon>
        <taxon>Viridiplantae</taxon>
        <taxon>Streptophyta</taxon>
        <taxon>Embryophyta</taxon>
        <taxon>Tracheophyta</taxon>
        <taxon>Spermatophyta</taxon>
        <taxon>Magnoliopsida</taxon>
        <taxon>eudicotyledons</taxon>
        <taxon>Gunneridae</taxon>
        <taxon>Pentapetalae</taxon>
        <taxon>rosids</taxon>
        <taxon>malvids</taxon>
        <taxon>Brassicales</taxon>
        <taxon>Brassicaceae</taxon>
        <taxon>Camelineae</taxon>
        <taxon>Arabidopsis</taxon>
    </lineage>
</organism>
<keyword id="KW-0238">DNA-binding</keyword>
<keyword id="KW-0539">Nucleus</keyword>
<keyword id="KW-1185">Reference proteome</keyword>
<keyword id="KW-0677">Repeat</keyword>
<keyword id="KW-0804">Transcription</keyword>
<keyword id="KW-0805">Transcription regulation</keyword>
<dbReference type="EMBL" id="AL031004">
    <property type="protein sequence ID" value="CAA19760.1"/>
    <property type="molecule type" value="Genomic_DNA"/>
</dbReference>
<dbReference type="EMBL" id="AL161579">
    <property type="protein sequence ID" value="CAB79881.1"/>
    <property type="molecule type" value="Genomic_DNA"/>
</dbReference>
<dbReference type="EMBL" id="CP002687">
    <property type="protein sequence ID" value="AEE85939.1"/>
    <property type="molecule type" value="Genomic_DNA"/>
</dbReference>
<dbReference type="PIR" id="T05107">
    <property type="entry name" value="T05107"/>
</dbReference>
<dbReference type="RefSeq" id="NP_194891.1">
    <property type="nucleotide sequence ID" value="NM_119312.1"/>
</dbReference>
<dbReference type="SMR" id="Q9SB79"/>
<dbReference type="STRING" id="3702.Q9SB79"/>
<dbReference type="GlyGen" id="Q9SB79">
    <property type="glycosylation" value="1 site"/>
</dbReference>
<dbReference type="PaxDb" id="3702-AT4G31630.1"/>
<dbReference type="EnsemblPlants" id="AT4G31630.1">
    <property type="protein sequence ID" value="AT4G31630.1"/>
    <property type="gene ID" value="AT4G31630"/>
</dbReference>
<dbReference type="GeneID" id="829291"/>
<dbReference type="Gramene" id="AT4G31630.1">
    <property type="protein sequence ID" value="AT4G31630.1"/>
    <property type="gene ID" value="AT4G31630"/>
</dbReference>
<dbReference type="KEGG" id="ath:AT4G31630"/>
<dbReference type="Araport" id="AT4G31630"/>
<dbReference type="TAIR" id="AT4G31630"/>
<dbReference type="eggNOG" id="ENOG502T1P1">
    <property type="taxonomic scope" value="Eukaryota"/>
</dbReference>
<dbReference type="HOGENOM" id="CLU_014437_0_0_1"/>
<dbReference type="InParanoid" id="Q9SB79"/>
<dbReference type="OMA" id="LRHNKTT"/>
<dbReference type="PhylomeDB" id="Q9SB79"/>
<dbReference type="PRO" id="PR:Q9SB79"/>
<dbReference type="Proteomes" id="UP000006548">
    <property type="component" value="Chromosome 4"/>
</dbReference>
<dbReference type="ExpressionAtlas" id="Q9SB79">
    <property type="expression patterns" value="baseline and differential"/>
</dbReference>
<dbReference type="GO" id="GO:0005634">
    <property type="term" value="C:nucleus"/>
    <property type="evidence" value="ECO:0007669"/>
    <property type="project" value="UniProtKB-SubCell"/>
</dbReference>
<dbReference type="GO" id="GO:0003677">
    <property type="term" value="F:DNA binding"/>
    <property type="evidence" value="ECO:0007669"/>
    <property type="project" value="UniProtKB-KW"/>
</dbReference>
<dbReference type="CDD" id="cd10017">
    <property type="entry name" value="B3_DNA"/>
    <property type="match status" value="3"/>
</dbReference>
<dbReference type="Gene3D" id="2.40.330.10">
    <property type="entry name" value="DNA-binding pseudobarrel domain"/>
    <property type="match status" value="3"/>
</dbReference>
<dbReference type="InterPro" id="IPR003340">
    <property type="entry name" value="B3_DNA-bd"/>
</dbReference>
<dbReference type="InterPro" id="IPR015300">
    <property type="entry name" value="DNA-bd_pseudobarrel_sf"/>
</dbReference>
<dbReference type="InterPro" id="IPR039218">
    <property type="entry name" value="REM_fam"/>
</dbReference>
<dbReference type="PANTHER" id="PTHR31674">
    <property type="entry name" value="B3 DOMAIN-CONTAINING PROTEIN REM-LIKE 3-RELATED"/>
    <property type="match status" value="1"/>
</dbReference>
<dbReference type="PANTHER" id="PTHR31674:SF62">
    <property type="entry name" value="B3 DOMAIN-CONTAINING PROTEIN REM14-RELATED"/>
    <property type="match status" value="1"/>
</dbReference>
<dbReference type="Pfam" id="PF02362">
    <property type="entry name" value="B3"/>
    <property type="match status" value="2"/>
</dbReference>
<dbReference type="SMART" id="SM01019">
    <property type="entry name" value="B3"/>
    <property type="match status" value="3"/>
</dbReference>
<dbReference type="SUPFAM" id="SSF101936">
    <property type="entry name" value="DNA-binding pseudobarrel domain"/>
    <property type="match status" value="3"/>
</dbReference>
<dbReference type="PROSITE" id="PS50863">
    <property type="entry name" value="B3"/>
    <property type="match status" value="3"/>
</dbReference>
<gene>
    <name type="primary">REM4</name>
    <name type="ordered locus">At4g31630</name>
    <name type="ORF">F28M20.180</name>
</gene>
<comment type="subcellular location">
    <subcellularLocation>
        <location evidence="1">Nucleus</location>
    </subcellularLocation>
</comment>
<name>REM4_ARATH</name>
<proteinExistence type="inferred from homology"/>
<feature type="chain" id="PRO_0000375098" description="Putative B3 domain-containing protein REM4">
    <location>
        <begin position="1"/>
        <end position="512"/>
    </location>
</feature>
<feature type="DNA-binding region" description="TF-B3 1" evidence="1">
    <location>
        <begin position="11"/>
        <end position="103"/>
    </location>
</feature>
<feature type="DNA-binding region" description="TF-B3 2" evidence="1">
    <location>
        <begin position="169"/>
        <end position="265"/>
    </location>
</feature>
<feature type="DNA-binding region" description="TF-B3 3" evidence="1">
    <location>
        <begin position="307"/>
        <end position="403"/>
    </location>
</feature>
<feature type="region of interest" description="Disordered" evidence="2">
    <location>
        <begin position="111"/>
        <end position="145"/>
    </location>
</feature>
<feature type="region of interest" description="Disordered" evidence="2">
    <location>
        <begin position="408"/>
        <end position="465"/>
    </location>
</feature>
<feature type="compositionally biased region" description="Acidic residues" evidence="2">
    <location>
        <begin position="115"/>
        <end position="145"/>
    </location>
</feature>
<feature type="compositionally biased region" description="Basic and acidic residues" evidence="2">
    <location>
        <begin position="410"/>
        <end position="421"/>
    </location>
</feature>
<feature type="compositionally biased region" description="Basic and acidic residues" evidence="2">
    <location>
        <begin position="432"/>
        <end position="442"/>
    </location>
</feature>
<protein>
    <recommendedName>
        <fullName>Putative B3 domain-containing protein REM4</fullName>
    </recommendedName>
    <alternativeName>
        <fullName>Protein REPRODUCTIVE MERISTEM 4</fullName>
    </alternativeName>
</protein>
<sequence length="512" mass="57354">MADPLIPSPTNKAFFIIDLSGQKSNPIIPTEFIWNHFNGKIQSTNMKLTSDASDRNWDVKLDGARFAGGWKDFSVSHSVRDDDLLSFRHDGGMVFHVSPFGRSFSQIQLISSSTSDDDDDERTVFDDDEDDDVGDDDDNSISEDDFCSKKISSKKRARKETESSSDKSYLVAHVTPSSLLRDNMCVLSKFARSNGLDRRECEIDLRDEHEKSWTLLLRHNKKTGQAFMRGGWRSFCRNNGIKAGSICRFKLVQSGIKPVLQLCPNASSIPEGNSSKARKKRNVSEIEGDEIESENCSETIPLNQNKILTFDLKPYVFRSCQFFLPASFARENGIVEAGEVTVLNKDGIEWKSHLVNIKGRDQFYNRGCQDFFVANGVKNVGDPFTLEVIRGGPSPILKICSKVKQAASSDGHKTADRKPRMTDQAPLAEEQTDNRVEKRAQVTEEGGPSRSTRADPGNLQQKQPCSISDHVKKVKQSIVDTLTDVRRFQSELKVKEQNLEASLQEIDALGMI</sequence>